<organism>
    <name type="scientific">Rattus norvegicus</name>
    <name type="common">Rat</name>
    <dbReference type="NCBI Taxonomy" id="10116"/>
    <lineage>
        <taxon>Eukaryota</taxon>
        <taxon>Metazoa</taxon>
        <taxon>Chordata</taxon>
        <taxon>Craniata</taxon>
        <taxon>Vertebrata</taxon>
        <taxon>Euteleostomi</taxon>
        <taxon>Mammalia</taxon>
        <taxon>Eutheria</taxon>
        <taxon>Euarchontoglires</taxon>
        <taxon>Glires</taxon>
        <taxon>Rodentia</taxon>
        <taxon>Myomorpha</taxon>
        <taxon>Muroidea</taxon>
        <taxon>Muridae</taxon>
        <taxon>Murinae</taxon>
        <taxon>Rattus</taxon>
    </lineage>
</organism>
<feature type="signal peptide" evidence="3">
    <location>
        <begin position="1"/>
        <end position="24"/>
    </location>
</feature>
<feature type="chain" id="PRO_0000418362" description="Metabotropic glycine receptor">
    <location>
        <begin position="25"/>
        <end position="1202"/>
    </location>
</feature>
<feature type="topological domain" description="Extracellular" evidence="1">
    <location>
        <begin position="25"/>
        <end position="417"/>
    </location>
</feature>
<feature type="transmembrane region" description="Helical; Name=1" evidence="1">
    <location>
        <begin position="418"/>
        <end position="439"/>
    </location>
</feature>
<feature type="topological domain" description="Cytoplasmic" evidence="1">
    <location>
        <begin position="440"/>
        <end position="451"/>
    </location>
</feature>
<feature type="transmembrane region" description="Helical; Name=2" evidence="1">
    <location>
        <begin position="452"/>
        <end position="474"/>
    </location>
</feature>
<feature type="topological domain" description="Extracellular" evidence="1">
    <location>
        <begin position="475"/>
        <end position="478"/>
    </location>
</feature>
<feature type="transmembrane region" description="Helical; Name=3" evidence="1">
    <location>
        <begin position="479"/>
        <end position="501"/>
    </location>
</feature>
<feature type="topological domain" description="Cytoplasmic" evidence="1">
    <location>
        <begin position="502"/>
        <end position="525"/>
    </location>
</feature>
<feature type="transmembrane region" description="Helical; Name=4" evidence="1">
    <location>
        <begin position="526"/>
        <end position="547"/>
    </location>
</feature>
<feature type="topological domain" description="Extracellular" evidence="1">
    <location>
        <begin position="548"/>
        <end position="576"/>
    </location>
</feature>
<feature type="transmembrane region" description="Helical; Name=5" evidence="1">
    <location>
        <begin position="577"/>
        <end position="597"/>
    </location>
</feature>
<feature type="topological domain" description="Cytoplasmic" evidence="1">
    <location>
        <begin position="598"/>
        <end position="611"/>
    </location>
</feature>
<feature type="transmembrane region" description="Helical; Name=6" evidence="1">
    <location>
        <begin position="612"/>
        <end position="633"/>
    </location>
</feature>
<feature type="topological domain" description="Extracellular" evidence="1">
    <location>
        <begin position="634"/>
        <end position="642"/>
    </location>
</feature>
<feature type="transmembrane region" description="Helical; Name=7" evidence="1">
    <location>
        <begin position="643"/>
        <end position="664"/>
    </location>
</feature>
<feature type="topological domain" description="Cytoplasmic" evidence="1">
    <location>
        <begin position="665"/>
        <end position="1202"/>
    </location>
</feature>
<feature type="region of interest" description="Disordered" evidence="4">
    <location>
        <begin position="25"/>
        <end position="62"/>
    </location>
</feature>
<feature type="region of interest" description="Cache-like region" evidence="1">
    <location>
        <begin position="85"/>
        <end position="281"/>
    </location>
</feature>
<feature type="region of interest" description="Disordered" evidence="4">
    <location>
        <begin position="234"/>
        <end position="253"/>
    </location>
</feature>
<feature type="region of interest" description="Disordered" evidence="4">
    <location>
        <begin position="757"/>
        <end position="899"/>
    </location>
</feature>
<feature type="region of interest" description="Disordered" evidence="4">
    <location>
        <begin position="914"/>
        <end position="995"/>
    </location>
</feature>
<feature type="region of interest" description="Disordered" evidence="4">
    <location>
        <begin position="1132"/>
        <end position="1162"/>
    </location>
</feature>
<feature type="short sequence motif" description="VCPWE motif 1" evidence="1">
    <location>
        <begin position="1002"/>
        <end position="1006"/>
    </location>
</feature>
<feature type="short sequence motif" description="VCPWE motif 2" evidence="1">
    <location>
        <begin position="1067"/>
        <end position="1071"/>
    </location>
</feature>
<feature type="short sequence motif" description="VCPWE motif 3" evidence="1">
    <location>
        <begin position="1167"/>
        <end position="1171"/>
    </location>
</feature>
<feature type="compositionally biased region" description="Basic and acidic residues" evidence="4">
    <location>
        <begin position="28"/>
        <end position="40"/>
    </location>
</feature>
<feature type="compositionally biased region" description="Basic and acidic residues" evidence="4">
    <location>
        <begin position="769"/>
        <end position="781"/>
    </location>
</feature>
<feature type="compositionally biased region" description="Basic and acidic residues" evidence="4">
    <location>
        <begin position="819"/>
        <end position="828"/>
    </location>
</feature>
<feature type="compositionally biased region" description="Low complexity" evidence="4">
    <location>
        <begin position="845"/>
        <end position="856"/>
    </location>
</feature>
<feature type="compositionally biased region" description="Basic and acidic residues" evidence="4">
    <location>
        <begin position="925"/>
        <end position="943"/>
    </location>
</feature>
<feature type="compositionally biased region" description="Polar residues" evidence="4">
    <location>
        <begin position="944"/>
        <end position="958"/>
    </location>
</feature>
<feature type="compositionally biased region" description="Polar residues" evidence="4">
    <location>
        <begin position="975"/>
        <end position="994"/>
    </location>
</feature>
<feature type="compositionally biased region" description="Polar residues" evidence="4">
    <location>
        <begin position="1132"/>
        <end position="1144"/>
    </location>
</feature>
<feature type="compositionally biased region" description="Polar residues" evidence="4">
    <location>
        <begin position="1151"/>
        <end position="1162"/>
    </location>
</feature>
<feature type="binding site" evidence="1">
    <location>
        <position position="172"/>
    </location>
    <ligand>
        <name>glycine</name>
        <dbReference type="ChEBI" id="CHEBI:57305"/>
    </ligand>
</feature>
<feature type="binding site" evidence="1">
    <location>
        <position position="173"/>
    </location>
    <ligand>
        <name>glycine</name>
        <dbReference type="ChEBI" id="CHEBI:57305"/>
    </ligand>
</feature>
<feature type="binding site" evidence="1">
    <location>
        <position position="271"/>
    </location>
    <ligand>
        <name>glycine</name>
        <dbReference type="ChEBI" id="CHEBI:57305"/>
    </ligand>
</feature>
<feature type="binding site" evidence="1">
    <location>
        <position position="307"/>
    </location>
    <ligand>
        <name>glycine</name>
        <dbReference type="ChEBI" id="CHEBI:57305"/>
    </ligand>
</feature>
<feature type="modified residue" description="Phosphoserine" evidence="2">
    <location>
        <position position="694"/>
    </location>
</feature>
<feature type="modified residue" description="Phosphoserine" evidence="2">
    <location>
        <position position="705"/>
    </location>
</feature>
<feature type="modified residue" description="Phosphoserine" evidence="2">
    <location>
        <position position="708"/>
    </location>
</feature>
<feature type="modified residue" description="Phosphoserine" evidence="2">
    <location>
        <position position="865"/>
    </location>
</feature>
<feature type="modified residue" description="Phosphoserine" evidence="2">
    <location>
        <position position="946"/>
    </location>
</feature>
<feature type="modified residue" description="Phosphoserine" evidence="2">
    <location>
        <position position="1061"/>
    </location>
</feature>
<feature type="modified residue" description="Phosphoserine" evidence="9">
    <location>
        <position position="1076"/>
    </location>
</feature>
<feature type="glycosylation site" description="N-linked (GlcNAc...) asparagine" evidence="3">
    <location>
        <position position="98"/>
    </location>
</feature>
<feature type="glycosylation site" description="N-linked (GlcNAc...) asparagine" evidence="3">
    <location>
        <position position="143"/>
    </location>
</feature>
<feature type="glycosylation site" description="N-linked (GlcNAc...) asparagine" evidence="3">
    <location>
        <position position="215"/>
    </location>
</feature>
<feature type="glycosylation site" description="N-linked (GlcNAc...) asparagine" evidence="3">
    <location>
        <position position="274"/>
    </location>
</feature>
<feature type="glycosylation site" description="N-linked (GlcNAc...) asparagine" evidence="3">
    <location>
        <position position="333"/>
    </location>
</feature>
<feature type="disulfide bond" evidence="1">
    <location>
        <begin position="99"/>
        <end position="272"/>
    </location>
</feature>
<feature type="disulfide bond" evidence="1">
    <location>
        <begin position="481"/>
        <end position="573"/>
    </location>
</feature>
<feature type="cross-link" description="Glycyl lysine isopeptide (Lys-Gly) (interchain with G-Cter in ubiquitin)" evidence="1">
    <location>
        <position position="774"/>
    </location>
</feature>
<dbReference type="SMR" id="D4A6L0"/>
<dbReference type="CORUM" id="D4A6L0"/>
<dbReference type="FunCoup" id="D4A6L0">
    <property type="interactions" value="1816"/>
</dbReference>
<dbReference type="STRING" id="10116.ENSRNOP00000038884"/>
<dbReference type="GlyCosmos" id="D4A6L0">
    <property type="glycosylation" value="5 sites, No reported glycans"/>
</dbReference>
<dbReference type="GlyGen" id="D4A6L0">
    <property type="glycosylation" value="5 sites"/>
</dbReference>
<dbReference type="iPTMnet" id="D4A6L0"/>
<dbReference type="PhosphoSitePlus" id="D4A6L0"/>
<dbReference type="PaxDb" id="10116-ENSRNOP00000038884"/>
<dbReference type="UCSC" id="RGD:1305841">
    <property type="organism name" value="rat"/>
</dbReference>
<dbReference type="AGR" id="RGD:1305841"/>
<dbReference type="RGD" id="1305841">
    <property type="gene designation" value="Gpr158"/>
</dbReference>
<dbReference type="eggNOG" id="KOG4418">
    <property type="taxonomic scope" value="Eukaryota"/>
</dbReference>
<dbReference type="InParanoid" id="D4A6L0"/>
<dbReference type="OrthoDB" id="5823771at2759"/>
<dbReference type="PhylomeDB" id="D4A6L0"/>
<dbReference type="TreeFam" id="TF319114"/>
<dbReference type="PRO" id="PR:D4A6L0"/>
<dbReference type="Proteomes" id="UP000002494">
    <property type="component" value="Unplaced"/>
</dbReference>
<dbReference type="GO" id="GO:0042995">
    <property type="term" value="C:cell projection"/>
    <property type="evidence" value="ECO:0007669"/>
    <property type="project" value="UniProtKB-KW"/>
</dbReference>
<dbReference type="GO" id="GO:0016020">
    <property type="term" value="C:membrane"/>
    <property type="evidence" value="ECO:0000266"/>
    <property type="project" value="RGD"/>
</dbReference>
<dbReference type="GO" id="GO:0005634">
    <property type="term" value="C:nucleus"/>
    <property type="evidence" value="ECO:0007669"/>
    <property type="project" value="UniProtKB-SubCell"/>
</dbReference>
<dbReference type="GO" id="GO:0005886">
    <property type="term" value="C:plasma membrane"/>
    <property type="evidence" value="ECO:0000250"/>
    <property type="project" value="UniProtKB"/>
</dbReference>
<dbReference type="GO" id="GO:0098839">
    <property type="term" value="C:postsynaptic density membrane"/>
    <property type="evidence" value="ECO:0000266"/>
    <property type="project" value="RGD"/>
</dbReference>
<dbReference type="GO" id="GO:0045211">
    <property type="term" value="C:postsynaptic membrane"/>
    <property type="evidence" value="ECO:0000250"/>
    <property type="project" value="UniProtKB"/>
</dbReference>
<dbReference type="GO" id="GO:0042734">
    <property type="term" value="C:presynaptic membrane"/>
    <property type="evidence" value="ECO:0007669"/>
    <property type="project" value="UniProtKB-SubCell"/>
</dbReference>
<dbReference type="GO" id="GO:0008047">
    <property type="term" value="F:enzyme activator activity"/>
    <property type="evidence" value="ECO:0000250"/>
    <property type="project" value="UniProtKB"/>
</dbReference>
<dbReference type="GO" id="GO:0160079">
    <property type="term" value="F:G protein-coupled glycine receptor activity"/>
    <property type="evidence" value="ECO:0000250"/>
    <property type="project" value="UniProtKB"/>
</dbReference>
<dbReference type="GO" id="GO:0004888">
    <property type="term" value="F:transmembrane signaling receptor activity"/>
    <property type="evidence" value="ECO:0000250"/>
    <property type="project" value="UniProtKB"/>
</dbReference>
<dbReference type="GO" id="GO:0007420">
    <property type="term" value="P:brain development"/>
    <property type="evidence" value="ECO:0000266"/>
    <property type="project" value="RGD"/>
</dbReference>
<dbReference type="GO" id="GO:0050890">
    <property type="term" value="P:cognition"/>
    <property type="evidence" value="ECO:0000250"/>
    <property type="project" value="UniProtKB"/>
</dbReference>
<dbReference type="GO" id="GO:0007186">
    <property type="term" value="P:G protein-coupled receptor signaling pathway"/>
    <property type="evidence" value="ECO:0000250"/>
    <property type="project" value="UniProtKB"/>
</dbReference>
<dbReference type="GO" id="GO:0001956">
    <property type="term" value="P:positive regulation of neurotransmitter secretion"/>
    <property type="evidence" value="ECO:0000266"/>
    <property type="project" value="RGD"/>
</dbReference>
<dbReference type="GO" id="GO:0072659">
    <property type="term" value="P:protein localization to plasma membrane"/>
    <property type="evidence" value="ECO:0000250"/>
    <property type="project" value="UniProtKB"/>
</dbReference>
<dbReference type="GO" id="GO:0008277">
    <property type="term" value="P:regulation of G protein-coupled receptor signaling pathway"/>
    <property type="evidence" value="ECO:0000250"/>
    <property type="project" value="UniProtKB"/>
</dbReference>
<dbReference type="GO" id="GO:0050807">
    <property type="term" value="P:regulation of synapse organization"/>
    <property type="evidence" value="ECO:0000250"/>
    <property type="project" value="UniProtKB"/>
</dbReference>
<dbReference type="CDD" id="cd15293">
    <property type="entry name" value="7tmC_GPR158-like"/>
    <property type="match status" value="1"/>
</dbReference>
<dbReference type="Gene3D" id="3.30.450.20">
    <property type="entry name" value="PAS domain"/>
    <property type="match status" value="1"/>
</dbReference>
<dbReference type="InterPro" id="IPR017978">
    <property type="entry name" value="GPCR_3_C"/>
</dbReference>
<dbReference type="InterPro" id="IPR043458">
    <property type="entry name" value="GPR158/179"/>
</dbReference>
<dbReference type="InterPro" id="IPR054714">
    <property type="entry name" value="GPR158_179_extracellular"/>
</dbReference>
<dbReference type="PANTHER" id="PTHR32546">
    <property type="entry name" value="G-PROTEIN COUPLED RECEPTOR 158-RELATED"/>
    <property type="match status" value="1"/>
</dbReference>
<dbReference type="PANTHER" id="PTHR32546:SF11">
    <property type="entry name" value="G-PROTEIN COUPLED RECEPTOR 158-RELATED"/>
    <property type="match status" value="1"/>
</dbReference>
<dbReference type="Pfam" id="PF00003">
    <property type="entry name" value="7tm_3"/>
    <property type="match status" value="1"/>
</dbReference>
<dbReference type="Pfam" id="PF22572">
    <property type="entry name" value="GPR158_179_EC"/>
    <property type="match status" value="1"/>
</dbReference>
<dbReference type="PROSITE" id="PS50259">
    <property type="entry name" value="G_PROTEIN_RECEP_F3_4"/>
    <property type="match status" value="1"/>
</dbReference>
<name>MGLYR_RAT</name>
<sequence>MGAMAYSLLLCLLLAHLGLGEVGASLDPSERPDSSRERTSRGKQHGQQLPRASAPDPSIPWSRSTDGTILAQKLAEEVPMDVASYLYTGDFHQLKRANCSGRYELAGLPGKSPSLASSHPSLHGALDTLTHATNFLNMMLQSNKSREQTVQDDLQWYQALVRSLLEGEPSISRAAITFSTESLSTPAPQVFLQATREESRILLQDLSSSAHHLANATLETEWFHGLRRKWRPHLHRRGSNQGPRGLGHSWRRRDGLGGDRSHVKWSPPFLECENGSYKPGWLVTLSAAFYGLQPNLVPEFRGVMKVDINLQKVDIDQCSSDGWFSGTHKCHLNNSECMPIKGLGFVLGAYQCVCKAGFYHPRVFSVNNFQRRGPDHHFSGSTKDVSEEAHVCLPCREGCPFCADDRPCFVQEDKYLRLAIISFQALCMLLDFVSMLVVYHFRKAKSIRASGLILLETILFGSLLLYFPVVILYFEPSTFRCILLRWVRLLGFATVYGTVTLKLHRVLKVFLSRTAQRIPYMTGGRVMRMLAVIVLVVFWFLVGWTSSMCQNLERDILLVGQGQTSDNLTFNMCLIDRWDYMTAVAEFLFLLWGIYLCYAVRTVPSAFHEPRYMAVAVHNELIITAIFHTIRFVLASRLQPDWMLMLYFAHTHLTVTVTIGLLLIPKFSHSSNNPRDDIATEAYEDELDMGRSGSYLNSSINSAWSEHSLDPEDIRDELKKLYAQLEIYKRKKMITNNPHLQKKRCSKKGLGRSIMRRITEIPETVSRQCSKEDKEGTDHSAAKGTGLVRKNPTESSGNTGRPKEESLKNRVFSLKKSHSTYDHVRDQTDESSSLPTESQEEEVTENSTLESLSSKKLTQKVKEDSEAESTESVPLVCKSASAHNLSSEKKPGHPRTSMLQKSLSVIASAKEKTLGLAGKTQTLVMEDRAKSQKPQPKDRETNRKYSNSDNTETNPNSNHTEELRKPQKSGIMKQQRVNLPTANPDASSSTTQIKDNFDIGEVCPWEVYDLTPGPVPSEPKAQKHVSIAASEVEQNPASFSKEKSHHKPKAAEGLYQANHKSIDKTEVCPWESHGQSPLEDENRLISKTPVLPGRAREENGSQLYTTNMCAGQYEELPPKAVASKVENENLNQMGDQEKQTSSSVDIIPGSCISSNNSPQPLTSRAEVCPWEFEPLEQPNAERIVALPASSALSASKIPGPRK</sequence>
<evidence type="ECO:0000250" key="1">
    <source>
        <dbReference type="UniProtKB" id="Q5T848"/>
    </source>
</evidence>
<evidence type="ECO:0000250" key="2">
    <source>
        <dbReference type="UniProtKB" id="Q8C419"/>
    </source>
</evidence>
<evidence type="ECO:0000255" key="3"/>
<evidence type="ECO:0000256" key="4">
    <source>
        <dbReference type="SAM" id="MobiDB-lite"/>
    </source>
</evidence>
<evidence type="ECO:0000269" key="5">
    <source>
    </source>
</evidence>
<evidence type="ECO:0000303" key="6">
    <source>
    </source>
</evidence>
<evidence type="ECO:0000305" key="7"/>
<evidence type="ECO:0000312" key="8">
    <source>
        <dbReference type="RGD" id="1305841"/>
    </source>
</evidence>
<evidence type="ECO:0007744" key="9">
    <source>
    </source>
</evidence>
<accession>D4A6L0</accession>
<keyword id="KW-1003">Cell membrane</keyword>
<keyword id="KW-0966">Cell projection</keyword>
<keyword id="KW-1015">Disulfide bond</keyword>
<keyword id="KW-0297">G-protein coupled receptor</keyword>
<keyword id="KW-0325">Glycoprotein</keyword>
<keyword id="KW-1017">Isopeptide bond</keyword>
<keyword id="KW-0472">Membrane</keyword>
<keyword id="KW-0539">Nucleus</keyword>
<keyword id="KW-0597">Phosphoprotein</keyword>
<keyword id="KW-0628">Postsynaptic cell membrane</keyword>
<keyword id="KW-0675">Receptor</keyword>
<keyword id="KW-1185">Reference proteome</keyword>
<keyword id="KW-0677">Repeat</keyword>
<keyword id="KW-0732">Signal</keyword>
<keyword id="KW-0770">Synapse</keyword>
<keyword id="KW-0807">Transducer</keyword>
<keyword id="KW-0812">Transmembrane</keyword>
<keyword id="KW-1133">Transmembrane helix</keyword>
<keyword id="KW-0832">Ubl conjugation</keyword>
<comment type="function">
    <text evidence="1 2">Metabotropic receptor for glycine that controls synapse formation and function in the brain. Acts as an atypical G-protein coupled receptor that recruits and regulates the RGS7-GNB5 complex instead of activating G proteins. In absence of glycine ligand, promotes the GTPase activator activity of RGS7, increasing the GTPase activity of G protein alpha subunits, thereby driving them into their inactive GDP-bound form. Glycine-binding changes the conformation of the intracellular surface, inhibiting the GTPase activator activity of the RGS7-GNB5 complex, promoting G protein alpha subunits into their active GTP-bound form and regulating cAMP levels. Also able to bind taurine, a compound closely related to glycine, but with a two-fold lower affinity. Glycine receptor-dependent regulation of cAMP controls key ion channels, kinases and neurotrophic factors involved in neuronal excitability and synaptic transmission (By similarity). Plays a pivotal role in regulating mood and cognition via its ability to regulate neuronal excitability in L2/L3 pyramidal neurons of the prefrontal cortex. Also involved in spatial learning by regulating hippocampal CA1 neuronal excitability. Acts as a synaptic organizer in the hippocampus, required for proper mossy fiber-CA3 neurocircuitry establishment, structure and function: induces presynaptic differentiation in contacting axons via its interaction with GPC4. In addition to glycine, may also act as a receptor for osteocalcin (BGLAP) hormone: osteocalcin-binding initiates a signaling response that prevents neuronal apoptosis in the hippocampus and regulates the synthesis of neurotransmitters (By similarity).</text>
</comment>
<comment type="subunit">
    <text evidence="1 2 5">Homodimer. Associates with the RGS7-GNB5 complex, promoting its localization to the cell membrane and regulating its GTPase activator activity. Interacts (via VCPWE motifs) with GNAO1 (By similarity). Interacts with GPC4 (PubMed:30290982). Interacts with EGFLAM (By similarity).</text>
</comment>
<comment type="subcellular location">
    <subcellularLocation>
        <location evidence="1">Cell membrane</location>
        <topology evidence="1">Multi-pass membrane protein</topology>
    </subcellularLocation>
    <subcellularLocation>
        <location evidence="2">Postsynaptic cell membrane</location>
        <topology evidence="1">Multi-pass membrane protein</topology>
    </subcellularLocation>
    <subcellularLocation>
        <location evidence="2">Presynaptic cell membrane</location>
        <topology evidence="1">Multi-pass membrane protein</topology>
    </subcellularLocation>
    <subcellularLocation>
        <location evidence="1">Nucleus</location>
    </subcellularLocation>
    <text evidence="1 2">Mainly localizes to the postsynaptic membrane, with a small portion to the presynaptic membrane (By similarity). Trafficks between the nucleus and the cell membrane; it is unclear how a multi-pass membrane protein can traffick between the nucleus and the cell membrane (By similarity).</text>
</comment>
<comment type="domain">
    <text evidence="1">The Cache-like region shares similarity with the Cache domain, a well-known receptor for amino acids. It acts as a ligand-binding module that recognizes and binds glycine and taurine.</text>
</comment>
<comment type="similarity">
    <text evidence="7">Belongs to the G-protein coupled receptor 3 family.</text>
</comment>
<proteinExistence type="evidence at protein level"/>
<gene>
    <name evidence="6 8" type="primary">Gpr158</name>
</gene>
<protein>
    <recommendedName>
        <fullName evidence="1">Metabotropic glycine receptor</fullName>
        <shortName evidence="1">mGlyR</shortName>
    </recommendedName>
    <alternativeName>
        <fullName evidence="7">G-protein coupled receptor 158</fullName>
    </alternativeName>
</protein>
<reference key="1">
    <citation type="journal article" date="2004" name="Nature">
        <title>Genome sequence of the Brown Norway rat yields insights into mammalian evolution.</title>
        <authorList>
            <person name="Gibbs R.A."/>
            <person name="Weinstock G.M."/>
            <person name="Metzker M.L."/>
            <person name="Muzny D.M."/>
            <person name="Sodergren E.J."/>
            <person name="Scherer S."/>
            <person name="Scott G."/>
            <person name="Steffen D."/>
            <person name="Worley K.C."/>
            <person name="Burch P.E."/>
            <person name="Okwuonu G."/>
            <person name="Hines S."/>
            <person name="Lewis L."/>
            <person name="Deramo C."/>
            <person name="Delgado O."/>
            <person name="Dugan-Rocha S."/>
            <person name="Miner G."/>
            <person name="Morgan M."/>
            <person name="Hawes A."/>
            <person name="Gill R."/>
            <person name="Holt R.A."/>
            <person name="Adams M.D."/>
            <person name="Amanatides P.G."/>
            <person name="Baden-Tillson H."/>
            <person name="Barnstead M."/>
            <person name="Chin S."/>
            <person name="Evans C.A."/>
            <person name="Ferriera S."/>
            <person name="Fosler C."/>
            <person name="Glodek A."/>
            <person name="Gu Z."/>
            <person name="Jennings D."/>
            <person name="Kraft C.L."/>
            <person name="Nguyen T."/>
            <person name="Pfannkoch C.M."/>
            <person name="Sitter C."/>
            <person name="Sutton G.G."/>
            <person name="Venter J.C."/>
            <person name="Woodage T."/>
            <person name="Smith D."/>
            <person name="Lee H.-M."/>
            <person name="Gustafson E."/>
            <person name="Cahill P."/>
            <person name="Kana A."/>
            <person name="Doucette-Stamm L."/>
            <person name="Weinstock K."/>
            <person name="Fechtel K."/>
            <person name="Weiss R.B."/>
            <person name="Dunn D.M."/>
            <person name="Green E.D."/>
            <person name="Blakesley R.W."/>
            <person name="Bouffard G.G."/>
            <person name="De Jong P.J."/>
            <person name="Osoegawa K."/>
            <person name="Zhu B."/>
            <person name="Marra M."/>
            <person name="Schein J."/>
            <person name="Bosdet I."/>
            <person name="Fjell C."/>
            <person name="Jones S."/>
            <person name="Krzywinski M."/>
            <person name="Mathewson C."/>
            <person name="Siddiqui A."/>
            <person name="Wye N."/>
            <person name="McPherson J."/>
            <person name="Zhao S."/>
            <person name="Fraser C.M."/>
            <person name="Shetty J."/>
            <person name="Shatsman S."/>
            <person name="Geer K."/>
            <person name="Chen Y."/>
            <person name="Abramzon S."/>
            <person name="Nierman W.C."/>
            <person name="Havlak P.H."/>
            <person name="Chen R."/>
            <person name="Durbin K.J."/>
            <person name="Egan A."/>
            <person name="Ren Y."/>
            <person name="Song X.-Z."/>
            <person name="Li B."/>
            <person name="Liu Y."/>
            <person name="Qin X."/>
            <person name="Cawley S."/>
            <person name="Cooney A.J."/>
            <person name="D'Souza L.M."/>
            <person name="Martin K."/>
            <person name="Wu J.Q."/>
            <person name="Gonzalez-Garay M.L."/>
            <person name="Jackson A.R."/>
            <person name="Kalafus K.J."/>
            <person name="McLeod M.P."/>
            <person name="Milosavljevic A."/>
            <person name="Virk D."/>
            <person name="Volkov A."/>
            <person name="Wheeler D.A."/>
            <person name="Zhang Z."/>
            <person name="Bailey J.A."/>
            <person name="Eichler E.E."/>
            <person name="Tuzun E."/>
            <person name="Birney E."/>
            <person name="Mongin E."/>
            <person name="Ureta-Vidal A."/>
            <person name="Woodwark C."/>
            <person name="Zdobnov E."/>
            <person name="Bork P."/>
            <person name="Suyama M."/>
            <person name="Torrents D."/>
            <person name="Alexandersson M."/>
            <person name="Trask B.J."/>
            <person name="Young J.M."/>
            <person name="Huang H."/>
            <person name="Wang H."/>
            <person name="Xing H."/>
            <person name="Daniels S."/>
            <person name="Gietzen D."/>
            <person name="Schmidt J."/>
            <person name="Stevens K."/>
            <person name="Vitt U."/>
            <person name="Wingrove J."/>
            <person name="Camara F."/>
            <person name="Mar Alba M."/>
            <person name="Abril J.F."/>
            <person name="Guigo R."/>
            <person name="Smit A."/>
            <person name="Dubchak I."/>
            <person name="Rubin E.M."/>
            <person name="Couronne O."/>
            <person name="Poliakov A."/>
            <person name="Huebner N."/>
            <person name="Ganten D."/>
            <person name="Goesele C."/>
            <person name="Hummel O."/>
            <person name="Kreitler T."/>
            <person name="Lee Y.-A."/>
            <person name="Monti J."/>
            <person name="Schulz H."/>
            <person name="Zimdahl H."/>
            <person name="Himmelbauer H."/>
            <person name="Lehrach H."/>
            <person name="Jacob H.J."/>
            <person name="Bromberg S."/>
            <person name="Gullings-Handley J."/>
            <person name="Jensen-Seaman M.I."/>
            <person name="Kwitek A.E."/>
            <person name="Lazar J."/>
            <person name="Pasko D."/>
            <person name="Tonellato P.J."/>
            <person name="Twigger S."/>
            <person name="Ponting C.P."/>
            <person name="Duarte J.M."/>
            <person name="Rice S."/>
            <person name="Goodstadt L."/>
            <person name="Beatson S.A."/>
            <person name="Emes R.D."/>
            <person name="Winter E.E."/>
            <person name="Webber C."/>
            <person name="Brandt P."/>
            <person name="Nyakatura G."/>
            <person name="Adetobi M."/>
            <person name="Chiaromonte F."/>
            <person name="Elnitski L."/>
            <person name="Eswara P."/>
            <person name="Hardison R.C."/>
            <person name="Hou M."/>
            <person name="Kolbe D."/>
            <person name="Makova K."/>
            <person name="Miller W."/>
            <person name="Nekrutenko A."/>
            <person name="Riemer C."/>
            <person name="Schwartz S."/>
            <person name="Taylor J."/>
            <person name="Yang S."/>
            <person name="Zhang Y."/>
            <person name="Lindpaintner K."/>
            <person name="Andrews T.D."/>
            <person name="Caccamo M."/>
            <person name="Clamp M."/>
            <person name="Clarke L."/>
            <person name="Curwen V."/>
            <person name="Durbin R.M."/>
            <person name="Eyras E."/>
            <person name="Searle S.M."/>
            <person name="Cooper G.M."/>
            <person name="Batzoglou S."/>
            <person name="Brudno M."/>
            <person name="Sidow A."/>
            <person name="Stone E.A."/>
            <person name="Payseur B.A."/>
            <person name="Bourque G."/>
            <person name="Lopez-Otin C."/>
            <person name="Puente X.S."/>
            <person name="Chakrabarti K."/>
            <person name="Chatterji S."/>
            <person name="Dewey C."/>
            <person name="Pachter L."/>
            <person name="Bray N."/>
            <person name="Yap V.B."/>
            <person name="Caspi A."/>
            <person name="Tesler G."/>
            <person name="Pevzner P.A."/>
            <person name="Haussler D."/>
            <person name="Roskin K.M."/>
            <person name="Baertsch R."/>
            <person name="Clawson H."/>
            <person name="Furey T.S."/>
            <person name="Hinrichs A.S."/>
            <person name="Karolchik D."/>
            <person name="Kent W.J."/>
            <person name="Rosenbloom K.R."/>
            <person name="Trumbower H."/>
            <person name="Weirauch M."/>
            <person name="Cooper D.N."/>
            <person name="Stenson P.D."/>
            <person name="Ma B."/>
            <person name="Brent M."/>
            <person name="Arumugam M."/>
            <person name="Shteynberg D."/>
            <person name="Copley R.R."/>
            <person name="Taylor M.S."/>
            <person name="Riethman H."/>
            <person name="Mudunuri U."/>
            <person name="Peterson J."/>
            <person name="Guyer M."/>
            <person name="Felsenfeld A."/>
            <person name="Old S."/>
            <person name="Mockrin S."/>
            <person name="Collins F.S."/>
        </authorList>
    </citation>
    <scope>NUCLEOTIDE SEQUENCE [LARGE SCALE GENOMIC DNA]</scope>
    <source>
        <strain>Brown Norway</strain>
    </source>
</reference>
<reference key="2">
    <citation type="journal article" date="2012" name="Nat. Commun.">
        <title>Quantitative maps of protein phosphorylation sites across 14 different rat organs and tissues.</title>
        <authorList>
            <person name="Lundby A."/>
            <person name="Secher A."/>
            <person name="Lage K."/>
            <person name="Nordsborg N.B."/>
            <person name="Dmytriyev A."/>
            <person name="Lundby C."/>
            <person name="Olsen J.V."/>
        </authorList>
    </citation>
    <scope>PHOSPHORYLATION [LARGE SCALE ANALYSIS] AT SER-1076</scope>
    <scope>IDENTIFICATION BY MASS SPECTROMETRY [LARGE SCALE ANALYSIS]</scope>
</reference>
<reference key="3">
    <citation type="journal article" date="2018" name="Neuron">
        <title>An input-specific orphan receptor GPR158-HSPG interaction organizes hippocampal mossy fiber-CA3 synapses.</title>
        <authorList>
            <person name="Condomitti G."/>
            <person name="Wierda K.D."/>
            <person name="Schroeder A."/>
            <person name="Rubio S.E."/>
            <person name="Vennekens K.M."/>
            <person name="Orlandi C."/>
            <person name="Martemyanov K.A."/>
            <person name="Gounko N.V."/>
            <person name="Savas J.N."/>
            <person name="de Wit J."/>
        </authorList>
    </citation>
    <scope>INTERACTION WITH GPC4</scope>
</reference>